<gene>
    <name type="primary">acyP</name>
    <name type="ordered locus">Acid_7268</name>
</gene>
<name>ACYP_SOLUE</name>
<organism>
    <name type="scientific">Solibacter usitatus (strain Ellin6076)</name>
    <dbReference type="NCBI Taxonomy" id="234267"/>
    <lineage>
        <taxon>Bacteria</taxon>
        <taxon>Pseudomonadati</taxon>
        <taxon>Acidobacteriota</taxon>
        <taxon>Terriglobia</taxon>
        <taxon>Bryobacterales</taxon>
        <taxon>Solibacteraceae</taxon>
        <taxon>Candidatus Solibacter</taxon>
    </lineage>
</organism>
<feature type="chain" id="PRO_0000326805" description="Acylphosphatase">
    <location>
        <begin position="1"/>
        <end position="96"/>
    </location>
</feature>
<feature type="domain" description="Acylphosphatase-like" evidence="1">
    <location>
        <begin position="11"/>
        <end position="96"/>
    </location>
</feature>
<feature type="active site" evidence="1">
    <location>
        <position position="26"/>
    </location>
</feature>
<feature type="active site" evidence="1">
    <location>
        <position position="44"/>
    </location>
</feature>
<accession>Q01Q91</accession>
<evidence type="ECO:0000255" key="1">
    <source>
        <dbReference type="PROSITE-ProRule" id="PRU00520"/>
    </source>
</evidence>
<evidence type="ECO:0000305" key="2"/>
<sequence length="96" mass="10756">MSKSAVSPSEARRWYVRGRVQGVGYRDFAQRAAVQLGLTGYARNLDDGRVEVYAVGPPSKLSELAGMLYRGPRWSDVRGIEEQEAAITSYDSFRIR</sequence>
<reference key="1">
    <citation type="journal article" date="2009" name="Appl. Environ. Microbiol.">
        <title>Three genomes from the phylum Acidobacteria provide insight into the lifestyles of these microorganisms in soils.</title>
        <authorList>
            <person name="Ward N.L."/>
            <person name="Challacombe J.F."/>
            <person name="Janssen P.H."/>
            <person name="Henrissat B."/>
            <person name="Coutinho P.M."/>
            <person name="Wu M."/>
            <person name="Xie G."/>
            <person name="Haft D.H."/>
            <person name="Sait M."/>
            <person name="Badger J."/>
            <person name="Barabote R.D."/>
            <person name="Bradley B."/>
            <person name="Brettin T.S."/>
            <person name="Brinkac L.M."/>
            <person name="Bruce D."/>
            <person name="Creasy T."/>
            <person name="Daugherty S.C."/>
            <person name="Davidsen T.M."/>
            <person name="DeBoy R.T."/>
            <person name="Detter J.C."/>
            <person name="Dodson R.J."/>
            <person name="Durkin A.S."/>
            <person name="Ganapathy A."/>
            <person name="Gwinn-Giglio M."/>
            <person name="Han C.S."/>
            <person name="Khouri H."/>
            <person name="Kiss H."/>
            <person name="Kothari S.P."/>
            <person name="Madupu R."/>
            <person name="Nelson K.E."/>
            <person name="Nelson W.C."/>
            <person name="Paulsen I."/>
            <person name="Penn K."/>
            <person name="Ren Q."/>
            <person name="Rosovitz M.J."/>
            <person name="Selengut J.D."/>
            <person name="Shrivastava S."/>
            <person name="Sullivan S.A."/>
            <person name="Tapia R."/>
            <person name="Thompson L.S."/>
            <person name="Watkins K.L."/>
            <person name="Yang Q."/>
            <person name="Yu C."/>
            <person name="Zafar N."/>
            <person name="Zhou L."/>
            <person name="Kuske C.R."/>
        </authorList>
    </citation>
    <scope>NUCLEOTIDE SEQUENCE [LARGE SCALE GENOMIC DNA]</scope>
    <source>
        <strain>Ellin6076</strain>
    </source>
</reference>
<dbReference type="EC" id="3.6.1.7"/>
<dbReference type="EMBL" id="CP000473">
    <property type="protein sequence ID" value="ABJ88179.1"/>
    <property type="molecule type" value="Genomic_DNA"/>
</dbReference>
<dbReference type="SMR" id="Q01Q91"/>
<dbReference type="FunCoup" id="Q01Q91">
    <property type="interactions" value="388"/>
</dbReference>
<dbReference type="STRING" id="234267.Acid_7268"/>
<dbReference type="KEGG" id="sus:Acid_7268"/>
<dbReference type="eggNOG" id="COG1254">
    <property type="taxonomic scope" value="Bacteria"/>
</dbReference>
<dbReference type="HOGENOM" id="CLU_141932_1_2_0"/>
<dbReference type="InParanoid" id="Q01Q91"/>
<dbReference type="OrthoDB" id="9808093at2"/>
<dbReference type="GO" id="GO:0003998">
    <property type="term" value="F:acylphosphatase activity"/>
    <property type="evidence" value="ECO:0007669"/>
    <property type="project" value="UniProtKB-EC"/>
</dbReference>
<dbReference type="Gene3D" id="3.30.70.100">
    <property type="match status" value="1"/>
</dbReference>
<dbReference type="InterPro" id="IPR020456">
    <property type="entry name" value="Acylphosphatase"/>
</dbReference>
<dbReference type="InterPro" id="IPR001792">
    <property type="entry name" value="Acylphosphatase-like_dom"/>
</dbReference>
<dbReference type="InterPro" id="IPR036046">
    <property type="entry name" value="Acylphosphatase-like_dom_sf"/>
</dbReference>
<dbReference type="InterPro" id="IPR017968">
    <property type="entry name" value="Acylphosphatase_CS"/>
</dbReference>
<dbReference type="PANTHER" id="PTHR47268">
    <property type="entry name" value="ACYLPHOSPHATASE"/>
    <property type="match status" value="1"/>
</dbReference>
<dbReference type="PANTHER" id="PTHR47268:SF4">
    <property type="entry name" value="ACYLPHOSPHATASE"/>
    <property type="match status" value="1"/>
</dbReference>
<dbReference type="Pfam" id="PF00708">
    <property type="entry name" value="Acylphosphatase"/>
    <property type="match status" value="1"/>
</dbReference>
<dbReference type="SUPFAM" id="SSF54975">
    <property type="entry name" value="Acylphosphatase/BLUF domain-like"/>
    <property type="match status" value="1"/>
</dbReference>
<dbReference type="PROSITE" id="PS00151">
    <property type="entry name" value="ACYLPHOSPHATASE_2"/>
    <property type="match status" value="1"/>
</dbReference>
<dbReference type="PROSITE" id="PS51160">
    <property type="entry name" value="ACYLPHOSPHATASE_3"/>
    <property type="match status" value="1"/>
</dbReference>
<comment type="catalytic activity">
    <reaction>
        <text>an acyl phosphate + H2O = a carboxylate + phosphate + H(+)</text>
        <dbReference type="Rhea" id="RHEA:14965"/>
        <dbReference type="ChEBI" id="CHEBI:15377"/>
        <dbReference type="ChEBI" id="CHEBI:15378"/>
        <dbReference type="ChEBI" id="CHEBI:29067"/>
        <dbReference type="ChEBI" id="CHEBI:43474"/>
        <dbReference type="ChEBI" id="CHEBI:59918"/>
        <dbReference type="EC" id="3.6.1.7"/>
    </reaction>
</comment>
<comment type="similarity">
    <text evidence="2">Belongs to the acylphosphatase family.</text>
</comment>
<protein>
    <recommendedName>
        <fullName>Acylphosphatase</fullName>
        <ecNumber>3.6.1.7</ecNumber>
    </recommendedName>
    <alternativeName>
        <fullName>Acylphosphate phosphohydrolase</fullName>
    </alternativeName>
</protein>
<keyword id="KW-0378">Hydrolase</keyword>
<proteinExistence type="inferred from homology"/>